<name>TXF18_LYCSI</name>
<accession>B6DD51</accession>
<dbReference type="EMBL" id="EU926135">
    <property type="protein sequence ID" value="ACI41467.1"/>
    <property type="molecule type" value="mRNA"/>
</dbReference>
<dbReference type="EMBL" id="FM864139">
    <property type="protein sequence ID" value="CAS03736.1"/>
    <property type="molecule type" value="mRNA"/>
</dbReference>
<dbReference type="SMR" id="B6DD51"/>
<dbReference type="ArachnoServer" id="AS001074">
    <property type="toxin name" value="U15-lycotoxin-Ls1h"/>
</dbReference>
<dbReference type="GO" id="GO:0005576">
    <property type="term" value="C:extracellular region"/>
    <property type="evidence" value="ECO:0007669"/>
    <property type="project" value="UniProtKB-SubCell"/>
</dbReference>
<dbReference type="GO" id="GO:0090729">
    <property type="term" value="F:toxin activity"/>
    <property type="evidence" value="ECO:0007669"/>
    <property type="project" value="UniProtKB-KW"/>
</dbReference>
<dbReference type="GO" id="GO:0042742">
    <property type="term" value="P:defense response to bacterium"/>
    <property type="evidence" value="ECO:0007669"/>
    <property type="project" value="UniProtKB-KW"/>
</dbReference>
<dbReference type="InterPro" id="IPR036645">
    <property type="entry name" value="Elafin-like_sf"/>
</dbReference>
<dbReference type="SUPFAM" id="SSF57256">
    <property type="entry name" value="Elafin-like"/>
    <property type="match status" value="1"/>
</dbReference>
<sequence>MNSKIFAVLLLLGLLSCVLSDQYCPKSSITACKKMNTRNDCCKDDDCTGGSWCCATPCGNFCKYPTDRPGGKRAAGGKSCKTGYVYY</sequence>
<comment type="function">
    <text evidence="1">Has antibacterial activity.</text>
</comment>
<comment type="subcellular location">
    <subcellularLocation>
        <location evidence="1">Secreted</location>
    </subcellularLocation>
</comment>
<comment type="tissue specificity">
    <text>Expressed by the venom gland.</text>
</comment>
<comment type="PTM">
    <text evidence="3">Contains 5 disulfide bonds.</text>
</comment>
<comment type="similarity">
    <text evidence="3">Belongs to the venom protein 11 family. 01 (wap-1) subfamily.</text>
</comment>
<keyword id="KW-0044">Antibiotic</keyword>
<keyword id="KW-0929">Antimicrobial</keyword>
<keyword id="KW-1015">Disulfide bond</keyword>
<keyword id="KW-0964">Secreted</keyword>
<keyword id="KW-0732">Signal</keyword>
<keyword id="KW-0800">Toxin</keyword>
<proteinExistence type="evidence at transcript level"/>
<organism>
    <name type="scientific">Lycosa singoriensis</name>
    <name type="common">Wolf spider</name>
    <name type="synonym">Aranea singoriensis</name>
    <dbReference type="NCBI Taxonomy" id="434756"/>
    <lineage>
        <taxon>Eukaryota</taxon>
        <taxon>Metazoa</taxon>
        <taxon>Ecdysozoa</taxon>
        <taxon>Arthropoda</taxon>
        <taxon>Chelicerata</taxon>
        <taxon>Arachnida</taxon>
        <taxon>Araneae</taxon>
        <taxon>Araneomorphae</taxon>
        <taxon>Entelegynae</taxon>
        <taxon>Lycosoidea</taxon>
        <taxon>Lycosidae</taxon>
        <taxon>Lycosa</taxon>
    </lineage>
</organism>
<reference key="1">
    <citation type="journal article" date="2010" name="Zoology">
        <title>Transcriptome analysis of the venom glands of the Chinese wolf spider Lycosa singoriensis.</title>
        <authorList>
            <person name="Zhang Y."/>
            <person name="Chen J."/>
            <person name="Tang X."/>
            <person name="Wang F."/>
            <person name="Jiang L."/>
            <person name="Xiong X."/>
            <person name="Wang M."/>
            <person name="Rong M."/>
            <person name="Liu Z."/>
            <person name="Liang S."/>
        </authorList>
    </citation>
    <scope>NUCLEOTIDE SEQUENCE [LARGE SCALE MRNA]</scope>
    <source>
        <tissue>Venom gland</tissue>
    </source>
</reference>
<evidence type="ECO:0000250" key="1"/>
<evidence type="ECO:0000255" key="2"/>
<evidence type="ECO:0000305" key="3"/>
<protein>
    <recommendedName>
        <fullName>U15-lycotoxin-Ls1h</fullName>
    </recommendedName>
    <alternativeName>
        <fullName>Toxin-like structure LSTX-N18</fullName>
    </alternativeName>
</protein>
<feature type="signal peptide" evidence="2">
    <location>
        <begin position="1"/>
        <end position="20"/>
    </location>
</feature>
<feature type="chain" id="PRO_0000401894" description="U15-lycotoxin-Ls1h">
    <location>
        <begin position="21"/>
        <end position="87"/>
    </location>
</feature>
<feature type="domain" description="WAP">
    <location>
        <begin position="21"/>
        <end position="66"/>
    </location>
</feature>
<feature type="disulfide bond" evidence="1">
    <location>
        <begin position="24"/>
        <end position="54"/>
    </location>
</feature>
<feature type="disulfide bond" evidence="1">
    <location>
        <begin position="32"/>
        <end position="58"/>
    </location>
</feature>
<feature type="disulfide bond" evidence="1">
    <location>
        <begin position="41"/>
        <end position="53"/>
    </location>
</feature>
<feature type="disulfide bond" evidence="3">
    <location>
        <begin position="42"/>
        <end position="80"/>
    </location>
</feature>
<feature type="disulfide bond" evidence="1">
    <location>
        <begin position="47"/>
        <end position="62"/>
    </location>
</feature>